<feature type="chain" id="PRO_1000070117" description="Membrane protein insertase YidC">
    <location>
        <begin position="1"/>
        <end position="622"/>
    </location>
</feature>
<feature type="transmembrane region" description="Helical" evidence="1">
    <location>
        <begin position="8"/>
        <end position="28"/>
    </location>
</feature>
<feature type="transmembrane region" description="Helical" evidence="1">
    <location>
        <begin position="413"/>
        <end position="433"/>
    </location>
</feature>
<feature type="transmembrane region" description="Helical" evidence="1">
    <location>
        <begin position="484"/>
        <end position="504"/>
    </location>
</feature>
<feature type="transmembrane region" description="Helical" evidence="1">
    <location>
        <begin position="532"/>
        <end position="552"/>
    </location>
</feature>
<feature type="transmembrane region" description="Helical" evidence="1">
    <location>
        <begin position="571"/>
        <end position="591"/>
    </location>
</feature>
<feature type="region of interest" description="Disordered" evidence="2">
    <location>
        <begin position="33"/>
        <end position="70"/>
    </location>
</feature>
<feature type="compositionally biased region" description="Basic and acidic residues" evidence="2">
    <location>
        <begin position="33"/>
        <end position="61"/>
    </location>
</feature>
<keyword id="KW-0997">Cell inner membrane</keyword>
<keyword id="KW-1003">Cell membrane</keyword>
<keyword id="KW-0143">Chaperone</keyword>
<keyword id="KW-0472">Membrane</keyword>
<keyword id="KW-0653">Protein transport</keyword>
<keyword id="KW-0812">Transmembrane</keyword>
<keyword id="KW-1133">Transmembrane helix</keyword>
<keyword id="KW-0813">Transport</keyword>
<protein>
    <recommendedName>
        <fullName evidence="1">Membrane protein insertase YidC</fullName>
    </recommendedName>
    <alternativeName>
        <fullName evidence="1">Foldase YidC</fullName>
    </alternativeName>
    <alternativeName>
        <fullName evidence="1">Membrane integrase YidC</fullName>
    </alternativeName>
    <alternativeName>
        <fullName evidence="1">Membrane protein YidC</fullName>
    </alternativeName>
</protein>
<gene>
    <name evidence="1" type="primary">yidC</name>
    <name type="ordered locus">LBL_2936</name>
</gene>
<organism>
    <name type="scientific">Leptospira borgpetersenii serovar Hardjo-bovis (strain L550)</name>
    <dbReference type="NCBI Taxonomy" id="355276"/>
    <lineage>
        <taxon>Bacteria</taxon>
        <taxon>Pseudomonadati</taxon>
        <taxon>Spirochaetota</taxon>
        <taxon>Spirochaetia</taxon>
        <taxon>Leptospirales</taxon>
        <taxon>Leptospiraceae</taxon>
        <taxon>Leptospira</taxon>
    </lineage>
</organism>
<reference key="1">
    <citation type="journal article" date="2006" name="Proc. Natl. Acad. Sci. U.S.A.">
        <title>Genome reduction in Leptospira borgpetersenii reflects limited transmission potential.</title>
        <authorList>
            <person name="Bulach D.M."/>
            <person name="Zuerner R.L."/>
            <person name="Wilson P."/>
            <person name="Seemann T."/>
            <person name="McGrath A."/>
            <person name="Cullen P.A."/>
            <person name="Davis J."/>
            <person name="Johnson M."/>
            <person name="Kuczek E."/>
            <person name="Alt D.P."/>
            <person name="Peterson-Burch B."/>
            <person name="Coppel R.L."/>
            <person name="Rood J.I."/>
            <person name="Davies J.K."/>
            <person name="Adler B."/>
        </authorList>
    </citation>
    <scope>NUCLEOTIDE SEQUENCE [LARGE SCALE GENOMIC DNA]</scope>
    <source>
        <strain>L550</strain>
    </source>
</reference>
<sequence>MEDRQSRLFLALILSMGIWMGVNYFFFPPTPKKTSETKEVKVDKPSDDKQDQIQKEKKESRTTIPSKGTKIIPSESKKTLVVTESYIVEFSSLGGRISKFYVKDFTGPNGELVQVARKDPETLIVDGKTYYGVELSREKGFDFNFTDSLNELPHSEWNRIPFSLAENKADHSVVFSAFSPDKTYQLKKTFRFFDRENYFKVTVSVINLTKEKLSFASQKNVQYLRTFGSLGPFPKDRPLNDRDTANFFRFYHLDGSFNDTLDGSSSVGFWSSIVNFFTGNSGVDESFSLKTSTGGVDFAGTGSRYFIAVADPLDHKPQGIILDNRPKNESGAVLVYNNITLGPGEVYNLDFASYVGIRESIGMVFHDPELDPSQTKNSPFAGLSSDLNKSFNQGITTPFRNGIIWVLKQIYRFTIPNYGWSIIIFAILFKLVFYPLNQKQAESMKKMQELSPQLKTINEKFANDPKMRQQKTMELYKKNNVNPVGGCLPMVIQIPIFIALYTAFSDTIDLWNSPFLWVKDLSEPDVIWTSPAIPYFTQTGIGLNLLALLMVGTQIFQTRMTSVSMDPNQKMLMYVMPVMMLYIFWNMPSGVTLYWTFQNVLSIGQQWVTNHLKKTEAKKKAV</sequence>
<name>YIDC_LEPBL</name>
<evidence type="ECO:0000255" key="1">
    <source>
        <dbReference type="HAMAP-Rule" id="MF_01810"/>
    </source>
</evidence>
<evidence type="ECO:0000256" key="2">
    <source>
        <dbReference type="SAM" id="MobiDB-lite"/>
    </source>
</evidence>
<dbReference type="EMBL" id="CP000348">
    <property type="protein sequence ID" value="ABJ80253.1"/>
    <property type="molecule type" value="Genomic_DNA"/>
</dbReference>
<dbReference type="RefSeq" id="WP_011671159.1">
    <property type="nucleotide sequence ID" value="NC_008508.1"/>
</dbReference>
<dbReference type="SMR" id="Q04XE2"/>
<dbReference type="KEGG" id="lbl:LBL_2936"/>
<dbReference type="HOGENOM" id="CLU_016535_3_0_12"/>
<dbReference type="GO" id="GO:0005886">
    <property type="term" value="C:plasma membrane"/>
    <property type="evidence" value="ECO:0007669"/>
    <property type="project" value="UniProtKB-SubCell"/>
</dbReference>
<dbReference type="GO" id="GO:0032977">
    <property type="term" value="F:membrane insertase activity"/>
    <property type="evidence" value="ECO:0007669"/>
    <property type="project" value="InterPro"/>
</dbReference>
<dbReference type="GO" id="GO:0051205">
    <property type="term" value="P:protein insertion into membrane"/>
    <property type="evidence" value="ECO:0007669"/>
    <property type="project" value="TreeGrafter"/>
</dbReference>
<dbReference type="GO" id="GO:0015031">
    <property type="term" value="P:protein transport"/>
    <property type="evidence" value="ECO:0007669"/>
    <property type="project" value="UniProtKB-KW"/>
</dbReference>
<dbReference type="CDD" id="cd20070">
    <property type="entry name" value="5TM_YidC_Alb3"/>
    <property type="match status" value="1"/>
</dbReference>
<dbReference type="Gene3D" id="2.70.98.90">
    <property type="match status" value="1"/>
</dbReference>
<dbReference type="HAMAP" id="MF_01810">
    <property type="entry name" value="YidC_type1"/>
    <property type="match status" value="1"/>
</dbReference>
<dbReference type="InterPro" id="IPR019998">
    <property type="entry name" value="Membr_insert_YidC"/>
</dbReference>
<dbReference type="InterPro" id="IPR001708">
    <property type="entry name" value="YidC/ALB3/OXA1/COX18"/>
</dbReference>
<dbReference type="InterPro" id="IPR028055">
    <property type="entry name" value="YidC/Oxa/ALB_C"/>
</dbReference>
<dbReference type="InterPro" id="IPR047196">
    <property type="entry name" value="YidC_ALB_C"/>
</dbReference>
<dbReference type="InterPro" id="IPR038221">
    <property type="entry name" value="YidC_periplasmic_sf"/>
</dbReference>
<dbReference type="NCBIfam" id="TIGR03592">
    <property type="entry name" value="yidC_oxa1_cterm"/>
    <property type="match status" value="1"/>
</dbReference>
<dbReference type="PANTHER" id="PTHR12428:SF65">
    <property type="entry name" value="CYTOCHROME C OXIDASE ASSEMBLY PROTEIN COX18, MITOCHONDRIAL"/>
    <property type="match status" value="1"/>
</dbReference>
<dbReference type="PANTHER" id="PTHR12428">
    <property type="entry name" value="OXA1"/>
    <property type="match status" value="1"/>
</dbReference>
<dbReference type="Pfam" id="PF02096">
    <property type="entry name" value="60KD_IMP"/>
    <property type="match status" value="1"/>
</dbReference>
<comment type="function">
    <text evidence="1">Required for the insertion and/or proper folding and/or complex formation of integral membrane proteins into the membrane. Involved in integration of membrane proteins that insert both dependently and independently of the Sec translocase complex, as well as at least some lipoproteins. Aids folding of multispanning membrane proteins.</text>
</comment>
<comment type="subunit">
    <text evidence="1">Interacts with the Sec translocase complex via SecD. Specifically interacts with transmembrane segments of nascent integral membrane proteins during membrane integration.</text>
</comment>
<comment type="subcellular location">
    <subcellularLocation>
        <location evidence="1">Cell inner membrane</location>
        <topology evidence="1">Multi-pass membrane protein</topology>
    </subcellularLocation>
</comment>
<comment type="similarity">
    <text evidence="1">Belongs to the OXA1/ALB3/YidC family. Type 1 subfamily.</text>
</comment>
<proteinExistence type="inferred from homology"/>
<accession>Q04XE2</accession>